<feature type="propeptide" id="PRO_0000397460" description="Removed in mature form; by autocatalysis" evidence="1">
    <location>
        <begin position="1"/>
        <end position="13"/>
    </location>
</feature>
<feature type="chain" id="PRO_0000397461" description="Proteasome subunit beta 2">
    <location>
        <begin position="14"/>
        <end position="207"/>
    </location>
</feature>
<feature type="active site" description="Nucleophile" evidence="1">
    <location>
        <position position="14"/>
    </location>
</feature>
<comment type="function">
    <text evidence="1">Component of the proteasome core, a large protease complex with broad specificity involved in protein degradation.</text>
</comment>
<comment type="catalytic activity">
    <reaction evidence="1">
        <text>Cleavage of peptide bonds with very broad specificity.</text>
        <dbReference type="EC" id="3.4.25.1"/>
    </reaction>
</comment>
<comment type="activity regulation">
    <text evidence="1">The formation of the proteasomal ATPase PAN-20S proteasome complex, via the docking of the C-termini of PAN into the intersubunit pockets in the alpha-rings, triggers opening of the gate for substrate entry. Interconversion between the open-gate and close-gate conformations leads to a dynamic regulation of the 20S proteasome proteolysis activity.</text>
</comment>
<comment type="subunit">
    <text evidence="1">The 20S proteasome core is composed of 14 alpha and 14 beta subunits that assemble into four stacked heptameric rings, resulting in a barrel-shaped structure. The two inner rings, each composed of seven catalytic beta subunits, are sandwiched by two outer rings, each composed of seven alpha subunits. The catalytic chamber with the active sites is on the inside of the barrel. Has a gated structure, the ends of the cylinder being occluded by the N-termini of the alpha-subunits. Is capped at one or both ends by the proteasome regulatory ATPase, PAN.</text>
</comment>
<comment type="subcellular location">
    <subcellularLocation>
        <location evidence="1">Cytoplasm</location>
    </subcellularLocation>
</comment>
<comment type="similarity">
    <text evidence="1">Belongs to the peptidase T1B family.</text>
</comment>
<proteinExistence type="inferred from homology"/>
<evidence type="ECO:0000255" key="1">
    <source>
        <dbReference type="HAMAP-Rule" id="MF_02113"/>
    </source>
</evidence>
<keyword id="KW-0068">Autocatalytic cleavage</keyword>
<keyword id="KW-0963">Cytoplasm</keyword>
<keyword id="KW-0378">Hydrolase</keyword>
<keyword id="KW-0645">Protease</keyword>
<keyword id="KW-0647">Proteasome</keyword>
<keyword id="KW-1185">Reference proteome</keyword>
<keyword id="KW-0888">Threonine protease</keyword>
<keyword id="KW-0865">Zymogen</keyword>
<reference key="1">
    <citation type="journal article" date="2001" name="DNA Res.">
        <title>Complete genome sequence of an aerobic thermoacidophilic Crenarchaeon, Sulfolobus tokodaii strain7.</title>
        <authorList>
            <person name="Kawarabayasi Y."/>
            <person name="Hino Y."/>
            <person name="Horikawa H."/>
            <person name="Jin-no K."/>
            <person name="Takahashi M."/>
            <person name="Sekine M."/>
            <person name="Baba S."/>
            <person name="Ankai A."/>
            <person name="Kosugi H."/>
            <person name="Hosoyama A."/>
            <person name="Fukui S."/>
            <person name="Nagai Y."/>
            <person name="Nishijima K."/>
            <person name="Otsuka R."/>
            <person name="Nakazawa H."/>
            <person name="Takamiya M."/>
            <person name="Kato Y."/>
            <person name="Yoshizawa T."/>
            <person name="Tanaka T."/>
            <person name="Kudoh Y."/>
            <person name="Yamazaki J."/>
            <person name="Kushida N."/>
            <person name="Oguchi A."/>
            <person name="Aoki K."/>
            <person name="Masuda S."/>
            <person name="Yanagii M."/>
            <person name="Nishimura M."/>
            <person name="Yamagishi A."/>
            <person name="Oshima T."/>
            <person name="Kikuchi H."/>
        </authorList>
    </citation>
    <scope>NUCLEOTIDE SEQUENCE [LARGE SCALE GENOMIC DNA]</scope>
    <source>
        <strain>DSM 16993 / JCM 10545 / NBRC 100140 / 7</strain>
    </source>
</reference>
<accession>Q975D1</accession>
<gene>
    <name evidence="1" type="primary">psmB2</name>
    <name type="ordered locus">STK_04770</name>
</gene>
<dbReference type="EC" id="3.4.25.1" evidence="1"/>
<dbReference type="EMBL" id="BA000023">
    <property type="protein sequence ID" value="BAB65470.1"/>
    <property type="molecule type" value="Genomic_DNA"/>
</dbReference>
<dbReference type="RefSeq" id="WP_010978453.1">
    <property type="nucleotide sequence ID" value="NC_003106.2"/>
</dbReference>
<dbReference type="SMR" id="Q975D1"/>
<dbReference type="STRING" id="273063.STK_04770"/>
<dbReference type="MEROPS" id="T01.002"/>
<dbReference type="GeneID" id="1458419"/>
<dbReference type="KEGG" id="sto:STK_04770"/>
<dbReference type="PATRIC" id="fig|273063.9.peg.551"/>
<dbReference type="eggNOG" id="arCOG00970">
    <property type="taxonomic scope" value="Archaea"/>
</dbReference>
<dbReference type="OrthoDB" id="6330at2157"/>
<dbReference type="Proteomes" id="UP000001015">
    <property type="component" value="Chromosome"/>
</dbReference>
<dbReference type="GO" id="GO:0005737">
    <property type="term" value="C:cytoplasm"/>
    <property type="evidence" value="ECO:0007669"/>
    <property type="project" value="UniProtKB-SubCell"/>
</dbReference>
<dbReference type="GO" id="GO:0019774">
    <property type="term" value="C:proteasome core complex, beta-subunit complex"/>
    <property type="evidence" value="ECO:0007669"/>
    <property type="project" value="UniProtKB-UniRule"/>
</dbReference>
<dbReference type="GO" id="GO:0004298">
    <property type="term" value="F:threonine-type endopeptidase activity"/>
    <property type="evidence" value="ECO:0007669"/>
    <property type="project" value="UniProtKB-UniRule"/>
</dbReference>
<dbReference type="GO" id="GO:0010498">
    <property type="term" value="P:proteasomal protein catabolic process"/>
    <property type="evidence" value="ECO:0007669"/>
    <property type="project" value="UniProtKB-UniRule"/>
</dbReference>
<dbReference type="FunFam" id="3.60.20.10:FF:000049">
    <property type="entry name" value="Proteasome subunit beta"/>
    <property type="match status" value="1"/>
</dbReference>
<dbReference type="Gene3D" id="3.60.20.10">
    <property type="entry name" value="Glutamine Phosphoribosylpyrophosphate, subunit 1, domain 1"/>
    <property type="match status" value="1"/>
</dbReference>
<dbReference type="HAMAP" id="MF_02113_A">
    <property type="entry name" value="Proteasome_B_A"/>
    <property type="match status" value="1"/>
</dbReference>
<dbReference type="InterPro" id="IPR029055">
    <property type="entry name" value="Ntn_hydrolases_N"/>
</dbReference>
<dbReference type="InterPro" id="IPR019983">
    <property type="entry name" value="Pept_T1A_Psome_bsu_arc"/>
</dbReference>
<dbReference type="InterPro" id="IPR000243">
    <property type="entry name" value="Pept_T1A_subB"/>
</dbReference>
<dbReference type="InterPro" id="IPR016050">
    <property type="entry name" value="Proteasome_bsu_CS"/>
</dbReference>
<dbReference type="InterPro" id="IPR001353">
    <property type="entry name" value="Proteasome_sua/b"/>
</dbReference>
<dbReference type="InterPro" id="IPR023333">
    <property type="entry name" value="Proteasome_suB-type"/>
</dbReference>
<dbReference type="NCBIfam" id="TIGR03634">
    <property type="entry name" value="arc_protsome_B"/>
    <property type="match status" value="1"/>
</dbReference>
<dbReference type="PANTHER" id="PTHR32194:SF0">
    <property type="entry name" value="ATP-DEPENDENT PROTEASE SUBUNIT HSLV"/>
    <property type="match status" value="1"/>
</dbReference>
<dbReference type="PANTHER" id="PTHR32194">
    <property type="entry name" value="METALLOPROTEASE TLDD"/>
    <property type="match status" value="1"/>
</dbReference>
<dbReference type="Pfam" id="PF00227">
    <property type="entry name" value="Proteasome"/>
    <property type="match status" value="1"/>
</dbReference>
<dbReference type="PRINTS" id="PR00141">
    <property type="entry name" value="PROTEASOME"/>
</dbReference>
<dbReference type="SUPFAM" id="SSF56235">
    <property type="entry name" value="N-terminal nucleophile aminohydrolases (Ntn hydrolases)"/>
    <property type="match status" value="1"/>
</dbReference>
<dbReference type="PROSITE" id="PS00854">
    <property type="entry name" value="PROTEASOME_BETA_1"/>
    <property type="match status" value="1"/>
</dbReference>
<dbReference type="PROSITE" id="PS51476">
    <property type="entry name" value="PROTEASOME_BETA_2"/>
    <property type="match status" value="1"/>
</dbReference>
<name>PSB2_SULTO</name>
<sequence>METNNKLKILKTGTTTVGIKVKDGVVLAADRRASAGMYVAHKYVRKVLYVAPNIGITTAGSVADLQFIYDLLKNIYHYNLITGMRPITIKALATYLANMLSFSKYLPYIVQILIGGVDEQPRLYNLDYVGDITEEDYTATGSGSVEAIGVIEDEYRPDMTLDEAADLARRAIFSSIKRDPYTGTGVIVSKITKNGHEEKEYYPQRKI</sequence>
<protein>
    <recommendedName>
        <fullName evidence="1">Proteasome subunit beta 2</fullName>
        <ecNumber evidence="1">3.4.25.1</ecNumber>
    </recommendedName>
    <alternativeName>
        <fullName evidence="1">20S proteasome beta subunit 2</fullName>
    </alternativeName>
    <alternativeName>
        <fullName evidence="1">Proteasome core protein PsmB 2</fullName>
    </alternativeName>
</protein>
<organism>
    <name type="scientific">Sulfurisphaera tokodaii (strain DSM 16993 / JCM 10545 / NBRC 100140 / 7)</name>
    <name type="common">Sulfolobus tokodaii</name>
    <dbReference type="NCBI Taxonomy" id="273063"/>
    <lineage>
        <taxon>Archaea</taxon>
        <taxon>Thermoproteota</taxon>
        <taxon>Thermoprotei</taxon>
        <taxon>Sulfolobales</taxon>
        <taxon>Sulfolobaceae</taxon>
        <taxon>Sulfurisphaera</taxon>
    </lineage>
</organism>